<evidence type="ECO:0000255" key="1">
    <source>
        <dbReference type="HAMAP-Rule" id="MF_00036"/>
    </source>
</evidence>
<name>SYA_BURP0</name>
<accession>A3NUB0</accession>
<organism>
    <name type="scientific">Burkholderia pseudomallei (strain 1106a)</name>
    <dbReference type="NCBI Taxonomy" id="357348"/>
    <lineage>
        <taxon>Bacteria</taxon>
        <taxon>Pseudomonadati</taxon>
        <taxon>Pseudomonadota</taxon>
        <taxon>Betaproteobacteria</taxon>
        <taxon>Burkholderiales</taxon>
        <taxon>Burkholderiaceae</taxon>
        <taxon>Burkholderia</taxon>
        <taxon>pseudomallei group</taxon>
    </lineage>
</organism>
<reference key="1">
    <citation type="journal article" date="2010" name="Genome Biol. Evol.">
        <title>Continuing evolution of Burkholderia mallei through genome reduction and large-scale rearrangements.</title>
        <authorList>
            <person name="Losada L."/>
            <person name="Ronning C.M."/>
            <person name="DeShazer D."/>
            <person name="Woods D."/>
            <person name="Fedorova N."/>
            <person name="Kim H.S."/>
            <person name="Shabalina S.A."/>
            <person name="Pearson T.R."/>
            <person name="Brinkac L."/>
            <person name="Tan P."/>
            <person name="Nandi T."/>
            <person name="Crabtree J."/>
            <person name="Badger J."/>
            <person name="Beckstrom-Sternberg S."/>
            <person name="Saqib M."/>
            <person name="Schutzer S.E."/>
            <person name="Keim P."/>
            <person name="Nierman W.C."/>
        </authorList>
    </citation>
    <scope>NUCLEOTIDE SEQUENCE [LARGE SCALE GENOMIC DNA]</scope>
    <source>
        <strain>1106a</strain>
    </source>
</reference>
<dbReference type="EC" id="6.1.1.7" evidence="1"/>
<dbReference type="EMBL" id="CP000572">
    <property type="protein sequence ID" value="ABN89087.1"/>
    <property type="molecule type" value="Genomic_DNA"/>
</dbReference>
<dbReference type="RefSeq" id="WP_004204967.1">
    <property type="nucleotide sequence ID" value="NC_009076.1"/>
</dbReference>
<dbReference type="SMR" id="A3NUB0"/>
<dbReference type="GeneID" id="93059980"/>
<dbReference type="KEGG" id="bpl:BURPS1106A_1660"/>
<dbReference type="HOGENOM" id="CLU_004485_1_1_4"/>
<dbReference type="Proteomes" id="UP000006738">
    <property type="component" value="Chromosome I"/>
</dbReference>
<dbReference type="GO" id="GO:0005829">
    <property type="term" value="C:cytosol"/>
    <property type="evidence" value="ECO:0007669"/>
    <property type="project" value="TreeGrafter"/>
</dbReference>
<dbReference type="GO" id="GO:0004813">
    <property type="term" value="F:alanine-tRNA ligase activity"/>
    <property type="evidence" value="ECO:0007669"/>
    <property type="project" value="UniProtKB-UniRule"/>
</dbReference>
<dbReference type="GO" id="GO:0002161">
    <property type="term" value="F:aminoacyl-tRNA deacylase activity"/>
    <property type="evidence" value="ECO:0007669"/>
    <property type="project" value="TreeGrafter"/>
</dbReference>
<dbReference type="GO" id="GO:0005524">
    <property type="term" value="F:ATP binding"/>
    <property type="evidence" value="ECO:0007669"/>
    <property type="project" value="UniProtKB-UniRule"/>
</dbReference>
<dbReference type="GO" id="GO:0000049">
    <property type="term" value="F:tRNA binding"/>
    <property type="evidence" value="ECO:0007669"/>
    <property type="project" value="UniProtKB-KW"/>
</dbReference>
<dbReference type="GO" id="GO:0008270">
    <property type="term" value="F:zinc ion binding"/>
    <property type="evidence" value="ECO:0007669"/>
    <property type="project" value="UniProtKB-UniRule"/>
</dbReference>
<dbReference type="GO" id="GO:0006419">
    <property type="term" value="P:alanyl-tRNA aminoacylation"/>
    <property type="evidence" value="ECO:0007669"/>
    <property type="project" value="UniProtKB-UniRule"/>
</dbReference>
<dbReference type="GO" id="GO:0045892">
    <property type="term" value="P:negative regulation of DNA-templated transcription"/>
    <property type="evidence" value="ECO:0007669"/>
    <property type="project" value="TreeGrafter"/>
</dbReference>
<dbReference type="CDD" id="cd00673">
    <property type="entry name" value="AlaRS_core"/>
    <property type="match status" value="1"/>
</dbReference>
<dbReference type="FunFam" id="2.40.30.130:FF:000001">
    <property type="entry name" value="Alanine--tRNA ligase"/>
    <property type="match status" value="1"/>
</dbReference>
<dbReference type="FunFam" id="3.10.310.40:FF:000001">
    <property type="entry name" value="Alanine--tRNA ligase"/>
    <property type="match status" value="1"/>
</dbReference>
<dbReference type="FunFam" id="3.30.54.20:FF:000001">
    <property type="entry name" value="Alanine--tRNA ligase"/>
    <property type="match status" value="1"/>
</dbReference>
<dbReference type="FunFam" id="3.30.930.10:FF:000004">
    <property type="entry name" value="Alanine--tRNA ligase"/>
    <property type="match status" value="1"/>
</dbReference>
<dbReference type="FunFam" id="3.30.980.10:FF:000004">
    <property type="entry name" value="Alanine--tRNA ligase, cytoplasmic"/>
    <property type="match status" value="1"/>
</dbReference>
<dbReference type="Gene3D" id="2.40.30.130">
    <property type="match status" value="1"/>
</dbReference>
<dbReference type="Gene3D" id="3.10.310.40">
    <property type="match status" value="1"/>
</dbReference>
<dbReference type="Gene3D" id="3.30.54.20">
    <property type="match status" value="1"/>
</dbReference>
<dbReference type="Gene3D" id="6.10.250.550">
    <property type="match status" value="1"/>
</dbReference>
<dbReference type="Gene3D" id="3.30.930.10">
    <property type="entry name" value="Bira Bifunctional Protein, Domain 2"/>
    <property type="match status" value="1"/>
</dbReference>
<dbReference type="Gene3D" id="3.30.980.10">
    <property type="entry name" value="Threonyl-trna Synthetase, Chain A, domain 2"/>
    <property type="match status" value="1"/>
</dbReference>
<dbReference type="HAMAP" id="MF_00036_B">
    <property type="entry name" value="Ala_tRNA_synth_B"/>
    <property type="match status" value="1"/>
</dbReference>
<dbReference type="InterPro" id="IPR045864">
    <property type="entry name" value="aa-tRNA-synth_II/BPL/LPL"/>
</dbReference>
<dbReference type="InterPro" id="IPR002318">
    <property type="entry name" value="Ala-tRNA-lgiase_IIc"/>
</dbReference>
<dbReference type="InterPro" id="IPR018162">
    <property type="entry name" value="Ala-tRNA-ligase_IIc_anticod-bd"/>
</dbReference>
<dbReference type="InterPro" id="IPR018165">
    <property type="entry name" value="Ala-tRNA-synth_IIc_core"/>
</dbReference>
<dbReference type="InterPro" id="IPR018164">
    <property type="entry name" value="Ala-tRNA-synth_IIc_N"/>
</dbReference>
<dbReference type="InterPro" id="IPR050058">
    <property type="entry name" value="Ala-tRNA_ligase"/>
</dbReference>
<dbReference type="InterPro" id="IPR023033">
    <property type="entry name" value="Ala_tRNA_ligase_euk/bac"/>
</dbReference>
<dbReference type="InterPro" id="IPR003156">
    <property type="entry name" value="DHHA1_dom"/>
</dbReference>
<dbReference type="InterPro" id="IPR018163">
    <property type="entry name" value="Thr/Ala-tRNA-synth_IIc_edit"/>
</dbReference>
<dbReference type="InterPro" id="IPR009000">
    <property type="entry name" value="Transl_B-barrel_sf"/>
</dbReference>
<dbReference type="InterPro" id="IPR012947">
    <property type="entry name" value="tRNA_SAD"/>
</dbReference>
<dbReference type="NCBIfam" id="TIGR00344">
    <property type="entry name" value="alaS"/>
    <property type="match status" value="1"/>
</dbReference>
<dbReference type="PANTHER" id="PTHR11777:SF9">
    <property type="entry name" value="ALANINE--TRNA LIGASE, CYTOPLASMIC"/>
    <property type="match status" value="1"/>
</dbReference>
<dbReference type="PANTHER" id="PTHR11777">
    <property type="entry name" value="ALANYL-TRNA SYNTHETASE"/>
    <property type="match status" value="1"/>
</dbReference>
<dbReference type="Pfam" id="PF02272">
    <property type="entry name" value="DHHA1"/>
    <property type="match status" value="1"/>
</dbReference>
<dbReference type="Pfam" id="PF01411">
    <property type="entry name" value="tRNA-synt_2c"/>
    <property type="match status" value="1"/>
</dbReference>
<dbReference type="Pfam" id="PF07973">
    <property type="entry name" value="tRNA_SAD"/>
    <property type="match status" value="1"/>
</dbReference>
<dbReference type="PRINTS" id="PR00980">
    <property type="entry name" value="TRNASYNTHALA"/>
</dbReference>
<dbReference type="SMART" id="SM00863">
    <property type="entry name" value="tRNA_SAD"/>
    <property type="match status" value="1"/>
</dbReference>
<dbReference type="SUPFAM" id="SSF55681">
    <property type="entry name" value="Class II aaRS and biotin synthetases"/>
    <property type="match status" value="1"/>
</dbReference>
<dbReference type="SUPFAM" id="SSF101353">
    <property type="entry name" value="Putative anticodon-binding domain of alanyl-tRNA synthetase (AlaRS)"/>
    <property type="match status" value="1"/>
</dbReference>
<dbReference type="SUPFAM" id="SSF55186">
    <property type="entry name" value="ThrRS/AlaRS common domain"/>
    <property type="match status" value="1"/>
</dbReference>
<dbReference type="SUPFAM" id="SSF50447">
    <property type="entry name" value="Translation proteins"/>
    <property type="match status" value="1"/>
</dbReference>
<dbReference type="PROSITE" id="PS50860">
    <property type="entry name" value="AA_TRNA_LIGASE_II_ALA"/>
    <property type="match status" value="1"/>
</dbReference>
<sequence>MKAAEIREKFLKFFESKGHTIVRSSSLVPGNDPTLLFTNSGMVQFKDVFLGAETRPYSRATTAQRSVRAGGKHNDLENVGYTARHHTFFEMLGNFSFGDYFKRDAIHYAWELLTSVYKLPADKLWVTVYHDDDEAYDIWAKEVGVPAERIIRIGDNKGARYASDNFWQMGDTGPCGPCSEIFYDHGPDVWGGPPGSPEEDGDRYIEIWNLVFMQFNRDAQGNMTRLPKPCVDTGMGLERIAAVLQHVHSNYEIDLFQQLIKASARETGVADLANNSLKVIADHIRACSFLIVDGVIPGNEGRGYVLRRIVRRAIRHGYKLGRKAPFFHKLVADLVAEMGAAYPELKEAEPRVTDVLRQEEERFFETIEHGMSILEAALAELDAAGGKTLDGELAFKLHDTYGFPLDLTADVCRERGVTVDEPAFDDAMARQREQARAAGKFKATQGLEYTGAKTTFHGYEEIAFDDAKVVALYVEGASVGEVKAGESAVVVLDHTPFYAESGGQVGDQGVLANAATRFAVGDTLKVQADVIGHHGELEQGTLKVGDVVRAEIDAARRARTARNHSATHLMHKALRDVLGSHVQQKGSLVDADKTRFDFAHNAPLTDDEIRRVEAIVNEQVLANAPGIVRVMPYDDAVKGGAMALFGEKYGDEVRVLDLGFSRELCGGTHVHRTGDIGLFKIVAEGGVAAGIRRVEAITGDNAVRYVQALDARVNAAAAALKAQPSELLQRIGQVQDQVKSLEKELGALKSKLASSQGDELAQQAVEVGGVHVLAATLDGADAKTLRETVDKLKDKLKSAAIVLAAVDGGKVSLIAGVTADASKKVKAGELVNFVAQQVGGKGGGRPDMAQAGGTEPAKLPAALAGVKGWVEARL</sequence>
<protein>
    <recommendedName>
        <fullName evidence="1">Alanine--tRNA ligase</fullName>
        <ecNumber evidence="1">6.1.1.7</ecNumber>
    </recommendedName>
    <alternativeName>
        <fullName evidence="1">Alanyl-tRNA synthetase</fullName>
        <shortName evidence="1">AlaRS</shortName>
    </alternativeName>
</protein>
<gene>
    <name evidence="1" type="primary">alaS</name>
    <name type="ordered locus">BURPS1106A_1660</name>
</gene>
<feature type="chain" id="PRO_0000347530" description="Alanine--tRNA ligase">
    <location>
        <begin position="1"/>
        <end position="874"/>
    </location>
</feature>
<feature type="binding site" evidence="1">
    <location>
        <position position="564"/>
    </location>
    <ligand>
        <name>Zn(2+)</name>
        <dbReference type="ChEBI" id="CHEBI:29105"/>
    </ligand>
</feature>
<feature type="binding site" evidence="1">
    <location>
        <position position="568"/>
    </location>
    <ligand>
        <name>Zn(2+)</name>
        <dbReference type="ChEBI" id="CHEBI:29105"/>
    </ligand>
</feature>
<feature type="binding site" evidence="1">
    <location>
        <position position="665"/>
    </location>
    <ligand>
        <name>Zn(2+)</name>
        <dbReference type="ChEBI" id="CHEBI:29105"/>
    </ligand>
</feature>
<feature type="binding site" evidence="1">
    <location>
        <position position="669"/>
    </location>
    <ligand>
        <name>Zn(2+)</name>
        <dbReference type="ChEBI" id="CHEBI:29105"/>
    </ligand>
</feature>
<keyword id="KW-0030">Aminoacyl-tRNA synthetase</keyword>
<keyword id="KW-0067">ATP-binding</keyword>
<keyword id="KW-0963">Cytoplasm</keyword>
<keyword id="KW-0436">Ligase</keyword>
<keyword id="KW-0479">Metal-binding</keyword>
<keyword id="KW-0547">Nucleotide-binding</keyword>
<keyword id="KW-0648">Protein biosynthesis</keyword>
<keyword id="KW-0694">RNA-binding</keyword>
<keyword id="KW-0820">tRNA-binding</keyword>
<keyword id="KW-0862">Zinc</keyword>
<proteinExistence type="inferred from homology"/>
<comment type="function">
    <text evidence="1">Catalyzes the attachment of alanine to tRNA(Ala) in a two-step reaction: alanine is first activated by ATP to form Ala-AMP and then transferred to the acceptor end of tRNA(Ala). Also edits incorrectly charged Ser-tRNA(Ala) and Gly-tRNA(Ala) via its editing domain.</text>
</comment>
<comment type="catalytic activity">
    <reaction evidence="1">
        <text>tRNA(Ala) + L-alanine + ATP = L-alanyl-tRNA(Ala) + AMP + diphosphate</text>
        <dbReference type="Rhea" id="RHEA:12540"/>
        <dbReference type="Rhea" id="RHEA-COMP:9657"/>
        <dbReference type="Rhea" id="RHEA-COMP:9923"/>
        <dbReference type="ChEBI" id="CHEBI:30616"/>
        <dbReference type="ChEBI" id="CHEBI:33019"/>
        <dbReference type="ChEBI" id="CHEBI:57972"/>
        <dbReference type="ChEBI" id="CHEBI:78442"/>
        <dbReference type="ChEBI" id="CHEBI:78497"/>
        <dbReference type="ChEBI" id="CHEBI:456215"/>
        <dbReference type="EC" id="6.1.1.7"/>
    </reaction>
</comment>
<comment type="cofactor">
    <cofactor evidence="1">
        <name>Zn(2+)</name>
        <dbReference type="ChEBI" id="CHEBI:29105"/>
    </cofactor>
    <text evidence="1">Binds 1 zinc ion per subunit.</text>
</comment>
<comment type="subcellular location">
    <subcellularLocation>
        <location evidence="1">Cytoplasm</location>
    </subcellularLocation>
</comment>
<comment type="domain">
    <text evidence="1">Consists of three domains; the N-terminal catalytic domain, the editing domain and the C-terminal C-Ala domain. The editing domain removes incorrectly charged amino acids, while the C-Ala domain, along with tRNA(Ala), serves as a bridge to cooperatively bring together the editing and aminoacylation centers thus stimulating deacylation of misacylated tRNAs.</text>
</comment>
<comment type="similarity">
    <text evidence="1">Belongs to the class-II aminoacyl-tRNA synthetase family.</text>
</comment>